<name>SCPB_STRPI</name>
<dbReference type="EMBL" id="CP000936">
    <property type="protein sequence ID" value="ACA37045.1"/>
    <property type="molecule type" value="Genomic_DNA"/>
</dbReference>
<dbReference type="RefSeq" id="WP_000105310.1">
    <property type="nucleotide sequence ID" value="NC_010380.1"/>
</dbReference>
<dbReference type="SMR" id="B1I885"/>
<dbReference type="GeneID" id="45219111"/>
<dbReference type="KEGG" id="spv:SPH_1991"/>
<dbReference type="HOGENOM" id="CLU_045647_5_3_9"/>
<dbReference type="Proteomes" id="UP000002163">
    <property type="component" value="Chromosome"/>
</dbReference>
<dbReference type="GO" id="GO:0005737">
    <property type="term" value="C:cytoplasm"/>
    <property type="evidence" value="ECO:0007669"/>
    <property type="project" value="UniProtKB-SubCell"/>
</dbReference>
<dbReference type="GO" id="GO:0051301">
    <property type="term" value="P:cell division"/>
    <property type="evidence" value="ECO:0007669"/>
    <property type="project" value="UniProtKB-KW"/>
</dbReference>
<dbReference type="GO" id="GO:0051304">
    <property type="term" value="P:chromosome separation"/>
    <property type="evidence" value="ECO:0007669"/>
    <property type="project" value="InterPro"/>
</dbReference>
<dbReference type="GO" id="GO:0006260">
    <property type="term" value="P:DNA replication"/>
    <property type="evidence" value="ECO:0007669"/>
    <property type="project" value="UniProtKB-UniRule"/>
</dbReference>
<dbReference type="FunFam" id="1.10.10.10:FF:000507">
    <property type="entry name" value="Segregation and condensation protein B"/>
    <property type="match status" value="1"/>
</dbReference>
<dbReference type="FunFam" id="1.10.10.10:FF:000508">
    <property type="entry name" value="Segregation and condensation protein B"/>
    <property type="match status" value="1"/>
</dbReference>
<dbReference type="Gene3D" id="1.10.10.10">
    <property type="entry name" value="Winged helix-like DNA-binding domain superfamily/Winged helix DNA-binding domain"/>
    <property type="match status" value="2"/>
</dbReference>
<dbReference type="HAMAP" id="MF_01804">
    <property type="entry name" value="ScpB"/>
    <property type="match status" value="1"/>
</dbReference>
<dbReference type="InterPro" id="IPR005234">
    <property type="entry name" value="ScpB_csome_segregation"/>
</dbReference>
<dbReference type="InterPro" id="IPR036388">
    <property type="entry name" value="WH-like_DNA-bd_sf"/>
</dbReference>
<dbReference type="InterPro" id="IPR036390">
    <property type="entry name" value="WH_DNA-bd_sf"/>
</dbReference>
<dbReference type="NCBIfam" id="TIGR00281">
    <property type="entry name" value="SMC-Scp complex subunit ScpB"/>
    <property type="match status" value="1"/>
</dbReference>
<dbReference type="PANTHER" id="PTHR34298">
    <property type="entry name" value="SEGREGATION AND CONDENSATION PROTEIN B"/>
    <property type="match status" value="1"/>
</dbReference>
<dbReference type="PANTHER" id="PTHR34298:SF2">
    <property type="entry name" value="SEGREGATION AND CONDENSATION PROTEIN B"/>
    <property type="match status" value="1"/>
</dbReference>
<dbReference type="Pfam" id="PF04079">
    <property type="entry name" value="SMC_ScpB"/>
    <property type="match status" value="1"/>
</dbReference>
<dbReference type="PIRSF" id="PIRSF019345">
    <property type="entry name" value="ScpB"/>
    <property type="match status" value="1"/>
</dbReference>
<dbReference type="SUPFAM" id="SSF46785">
    <property type="entry name" value="Winged helix' DNA-binding domain"/>
    <property type="match status" value="2"/>
</dbReference>
<proteinExistence type="inferred from homology"/>
<keyword id="KW-0131">Cell cycle</keyword>
<keyword id="KW-0132">Cell division</keyword>
<keyword id="KW-0159">Chromosome partition</keyword>
<keyword id="KW-0963">Cytoplasm</keyword>
<protein>
    <recommendedName>
        <fullName evidence="1">Segregation and condensation protein B</fullName>
    </recommendedName>
</protein>
<sequence>MSTLAKIEALLFVAGEDGIRVRQLAELLSLPPTGIQQSLGKLAQKYEKDPDSSLALIETSGAYRLVTKPQFAEILKEYSKAPINQSLSRAALETLSIIAYKQPITRIEIDAIRGVNSSGALAKLQAFDLIKEDGKKEVLGRPNLYVTTDYFLDYMGINHLEELPVIDELEIQAQESQLFGERIEEDENQ</sequence>
<evidence type="ECO:0000255" key="1">
    <source>
        <dbReference type="HAMAP-Rule" id="MF_01804"/>
    </source>
</evidence>
<comment type="function">
    <text evidence="1">Participates in chromosomal partition during cell division. May act via the formation of a condensin-like complex containing Smc and ScpA that pull DNA away from mid-cell into both cell halves.</text>
</comment>
<comment type="subunit">
    <text evidence="1">Homodimer. Homodimerization may be required to stabilize the binding of ScpA to the Smc head domains. Component of a cohesin-like complex composed of ScpA, ScpB and the Smc homodimer, in which ScpA and ScpB bind to the head domain of Smc. The presence of the three proteins is required for the association of the complex with DNA.</text>
</comment>
<comment type="subcellular location">
    <subcellularLocation>
        <location evidence="1">Cytoplasm</location>
    </subcellularLocation>
    <text evidence="1">Associated with two foci at the outer edges of the nucleoid region in young cells, and at four foci within both cell halves in older cells.</text>
</comment>
<comment type="similarity">
    <text evidence="1">Belongs to the ScpB family.</text>
</comment>
<accession>B1I885</accession>
<feature type="chain" id="PRO_1000187542" description="Segregation and condensation protein B">
    <location>
        <begin position="1"/>
        <end position="189"/>
    </location>
</feature>
<gene>
    <name evidence="1" type="primary">scpB</name>
    <name type="ordered locus">SPH_1991</name>
</gene>
<reference key="1">
    <citation type="journal article" date="2010" name="Genome Biol.">
        <title>Structure and dynamics of the pan-genome of Streptococcus pneumoniae and closely related species.</title>
        <authorList>
            <person name="Donati C."/>
            <person name="Hiller N.L."/>
            <person name="Tettelin H."/>
            <person name="Muzzi A."/>
            <person name="Croucher N.J."/>
            <person name="Angiuoli S.V."/>
            <person name="Oggioni M."/>
            <person name="Dunning Hotopp J.C."/>
            <person name="Hu F.Z."/>
            <person name="Riley D.R."/>
            <person name="Covacci A."/>
            <person name="Mitchell T.J."/>
            <person name="Bentley S.D."/>
            <person name="Kilian M."/>
            <person name="Ehrlich G.D."/>
            <person name="Rappuoli R."/>
            <person name="Moxon E.R."/>
            <person name="Masignani V."/>
        </authorList>
    </citation>
    <scope>NUCLEOTIDE SEQUENCE [LARGE SCALE GENOMIC DNA]</scope>
    <source>
        <strain>Hungary19A-6</strain>
    </source>
</reference>
<organism>
    <name type="scientific">Streptococcus pneumoniae (strain Hungary19A-6)</name>
    <dbReference type="NCBI Taxonomy" id="487214"/>
    <lineage>
        <taxon>Bacteria</taxon>
        <taxon>Bacillati</taxon>
        <taxon>Bacillota</taxon>
        <taxon>Bacilli</taxon>
        <taxon>Lactobacillales</taxon>
        <taxon>Streptococcaceae</taxon>
        <taxon>Streptococcus</taxon>
    </lineage>
</organism>